<dbReference type="EC" id="6.1.1.4" evidence="1"/>
<dbReference type="EMBL" id="CP001129">
    <property type="protein sequence ID" value="ACG61544.1"/>
    <property type="molecule type" value="Genomic_DNA"/>
</dbReference>
<dbReference type="RefSeq" id="WP_012514827.1">
    <property type="nucleotide sequence ID" value="NC_011134.1"/>
</dbReference>
<dbReference type="SMR" id="B4U0A1"/>
<dbReference type="KEGG" id="sez:Sez_0166"/>
<dbReference type="HOGENOM" id="CLU_004427_0_0_9"/>
<dbReference type="Proteomes" id="UP000001873">
    <property type="component" value="Chromosome"/>
</dbReference>
<dbReference type="GO" id="GO:0005829">
    <property type="term" value="C:cytosol"/>
    <property type="evidence" value="ECO:0007669"/>
    <property type="project" value="TreeGrafter"/>
</dbReference>
<dbReference type="GO" id="GO:0002161">
    <property type="term" value="F:aminoacyl-tRNA deacylase activity"/>
    <property type="evidence" value="ECO:0007669"/>
    <property type="project" value="InterPro"/>
</dbReference>
<dbReference type="GO" id="GO:0005524">
    <property type="term" value="F:ATP binding"/>
    <property type="evidence" value="ECO:0007669"/>
    <property type="project" value="UniProtKB-UniRule"/>
</dbReference>
<dbReference type="GO" id="GO:0004823">
    <property type="term" value="F:leucine-tRNA ligase activity"/>
    <property type="evidence" value="ECO:0007669"/>
    <property type="project" value="UniProtKB-UniRule"/>
</dbReference>
<dbReference type="GO" id="GO:0006429">
    <property type="term" value="P:leucyl-tRNA aminoacylation"/>
    <property type="evidence" value="ECO:0007669"/>
    <property type="project" value="UniProtKB-UniRule"/>
</dbReference>
<dbReference type="CDD" id="cd07958">
    <property type="entry name" value="Anticodon_Ia_Leu_BEm"/>
    <property type="match status" value="1"/>
</dbReference>
<dbReference type="CDD" id="cd00812">
    <property type="entry name" value="LeuRS_core"/>
    <property type="match status" value="1"/>
</dbReference>
<dbReference type="FunFam" id="1.10.730.10:FF:000012">
    <property type="entry name" value="Leucine--tRNA ligase"/>
    <property type="match status" value="1"/>
</dbReference>
<dbReference type="FunFam" id="3.40.50.620:FF:000056">
    <property type="entry name" value="Leucine--tRNA ligase"/>
    <property type="match status" value="1"/>
</dbReference>
<dbReference type="FunFam" id="3.40.50.620:FF:000077">
    <property type="entry name" value="Leucine--tRNA ligase"/>
    <property type="match status" value="1"/>
</dbReference>
<dbReference type="FunFam" id="1.10.730.10:FF:000011">
    <property type="entry name" value="Leucine--tRNA ligase chloroplastic/mitochondrial"/>
    <property type="match status" value="1"/>
</dbReference>
<dbReference type="Gene3D" id="3.40.50.620">
    <property type="entry name" value="HUPs"/>
    <property type="match status" value="2"/>
</dbReference>
<dbReference type="Gene3D" id="1.10.730.10">
    <property type="entry name" value="Isoleucyl-tRNA Synthetase, Domain 1"/>
    <property type="match status" value="2"/>
</dbReference>
<dbReference type="HAMAP" id="MF_00049_B">
    <property type="entry name" value="Leu_tRNA_synth_B"/>
    <property type="match status" value="1"/>
</dbReference>
<dbReference type="InterPro" id="IPR001412">
    <property type="entry name" value="aa-tRNA-synth_I_CS"/>
</dbReference>
<dbReference type="InterPro" id="IPR002300">
    <property type="entry name" value="aa-tRNA-synth_Ia"/>
</dbReference>
<dbReference type="InterPro" id="IPR002302">
    <property type="entry name" value="Leu-tRNA-ligase"/>
</dbReference>
<dbReference type="InterPro" id="IPR025709">
    <property type="entry name" value="Leu_tRNA-synth_edit"/>
</dbReference>
<dbReference type="InterPro" id="IPR013155">
    <property type="entry name" value="M/V/L/I-tRNA-synth_anticd-bd"/>
</dbReference>
<dbReference type="InterPro" id="IPR015413">
    <property type="entry name" value="Methionyl/Leucyl_tRNA_Synth"/>
</dbReference>
<dbReference type="InterPro" id="IPR014729">
    <property type="entry name" value="Rossmann-like_a/b/a_fold"/>
</dbReference>
<dbReference type="InterPro" id="IPR009080">
    <property type="entry name" value="tRNAsynth_Ia_anticodon-bd"/>
</dbReference>
<dbReference type="InterPro" id="IPR009008">
    <property type="entry name" value="Val/Leu/Ile-tRNA-synth_edit"/>
</dbReference>
<dbReference type="NCBIfam" id="TIGR00396">
    <property type="entry name" value="leuS_bact"/>
    <property type="match status" value="1"/>
</dbReference>
<dbReference type="PANTHER" id="PTHR43740:SF2">
    <property type="entry name" value="LEUCINE--TRNA LIGASE, MITOCHONDRIAL"/>
    <property type="match status" value="1"/>
</dbReference>
<dbReference type="PANTHER" id="PTHR43740">
    <property type="entry name" value="LEUCYL-TRNA SYNTHETASE"/>
    <property type="match status" value="1"/>
</dbReference>
<dbReference type="Pfam" id="PF08264">
    <property type="entry name" value="Anticodon_1"/>
    <property type="match status" value="1"/>
</dbReference>
<dbReference type="Pfam" id="PF00133">
    <property type="entry name" value="tRNA-synt_1"/>
    <property type="match status" value="2"/>
</dbReference>
<dbReference type="Pfam" id="PF13603">
    <property type="entry name" value="tRNA-synt_1_2"/>
    <property type="match status" value="1"/>
</dbReference>
<dbReference type="Pfam" id="PF09334">
    <property type="entry name" value="tRNA-synt_1g"/>
    <property type="match status" value="1"/>
</dbReference>
<dbReference type="PRINTS" id="PR00985">
    <property type="entry name" value="TRNASYNTHLEU"/>
</dbReference>
<dbReference type="SUPFAM" id="SSF47323">
    <property type="entry name" value="Anticodon-binding domain of a subclass of class I aminoacyl-tRNA synthetases"/>
    <property type="match status" value="1"/>
</dbReference>
<dbReference type="SUPFAM" id="SSF52374">
    <property type="entry name" value="Nucleotidylyl transferase"/>
    <property type="match status" value="1"/>
</dbReference>
<dbReference type="SUPFAM" id="SSF50677">
    <property type="entry name" value="ValRS/IleRS/LeuRS editing domain"/>
    <property type="match status" value="1"/>
</dbReference>
<dbReference type="PROSITE" id="PS00178">
    <property type="entry name" value="AA_TRNA_LIGASE_I"/>
    <property type="match status" value="1"/>
</dbReference>
<keyword id="KW-0030">Aminoacyl-tRNA synthetase</keyword>
<keyword id="KW-0067">ATP-binding</keyword>
<keyword id="KW-0963">Cytoplasm</keyword>
<keyword id="KW-0436">Ligase</keyword>
<keyword id="KW-0547">Nucleotide-binding</keyword>
<keyword id="KW-0648">Protein biosynthesis</keyword>
<gene>
    <name evidence="1" type="primary">leuS</name>
    <name type="ordered locus">Sez_0166</name>
</gene>
<comment type="catalytic activity">
    <reaction evidence="1">
        <text>tRNA(Leu) + L-leucine + ATP = L-leucyl-tRNA(Leu) + AMP + diphosphate</text>
        <dbReference type="Rhea" id="RHEA:11688"/>
        <dbReference type="Rhea" id="RHEA-COMP:9613"/>
        <dbReference type="Rhea" id="RHEA-COMP:9622"/>
        <dbReference type="ChEBI" id="CHEBI:30616"/>
        <dbReference type="ChEBI" id="CHEBI:33019"/>
        <dbReference type="ChEBI" id="CHEBI:57427"/>
        <dbReference type="ChEBI" id="CHEBI:78442"/>
        <dbReference type="ChEBI" id="CHEBI:78494"/>
        <dbReference type="ChEBI" id="CHEBI:456215"/>
        <dbReference type="EC" id="6.1.1.4"/>
    </reaction>
</comment>
<comment type="subcellular location">
    <subcellularLocation>
        <location evidence="1">Cytoplasm</location>
    </subcellularLocation>
</comment>
<comment type="similarity">
    <text evidence="1">Belongs to the class-I aminoacyl-tRNA synthetase family.</text>
</comment>
<reference key="1">
    <citation type="journal article" date="2008" name="PLoS ONE">
        <title>Genome sequence of a lancefield group C Streptococcus zooepidemicus strain causing epidemic nephritis: new information about an old disease.</title>
        <authorList>
            <person name="Beres S.B."/>
            <person name="Sesso R."/>
            <person name="Pinto S.W.L."/>
            <person name="Hoe N.P."/>
            <person name="Porcella S.F."/>
            <person name="Deleo F.R."/>
            <person name="Musser J.M."/>
        </authorList>
    </citation>
    <scope>NUCLEOTIDE SEQUENCE [LARGE SCALE GENOMIC DNA]</scope>
    <source>
        <strain>MGCS10565</strain>
    </source>
</reference>
<proteinExistence type="inferred from homology"/>
<evidence type="ECO:0000255" key="1">
    <source>
        <dbReference type="HAMAP-Rule" id="MF_00049"/>
    </source>
</evidence>
<feature type="chain" id="PRO_1000091365" description="Leucine--tRNA ligase">
    <location>
        <begin position="1"/>
        <end position="833"/>
    </location>
</feature>
<feature type="short sequence motif" description="'HIGH' region">
    <location>
        <begin position="41"/>
        <end position="52"/>
    </location>
</feature>
<feature type="short sequence motif" description="'KMSKS' region">
    <location>
        <begin position="610"/>
        <end position="614"/>
    </location>
</feature>
<feature type="binding site" evidence="1">
    <location>
        <position position="613"/>
    </location>
    <ligand>
        <name>ATP</name>
        <dbReference type="ChEBI" id="CHEBI:30616"/>
    </ligand>
</feature>
<sequence>MTFYNHKAIEPKWQAFWADNHTFKTGTDASKPKFYALDMFPYPSGAGLHVGHPEGYTATDILSRFKRAQGYNVLHPMGWDAFGLPAEQYAMDTGNDPAEFTAENIANFKRQINALGFSYDWDREINTTDPSYYKWTQWIFTKLYEKGLAYEAEVPVNWVEELGTAIANEEVLPDGTSERGGYPVVRKPMRQWMLKITAYAERLLADLEEVDWPESIKDMQRNWIGKSTGANVTFKVKDTDKDFTVFTTRPDTLFGATYAVLAPEHALVDSITTAEQAAAVAEYKRQASLKSDLARTDLAKEKTGVWTGAYAINPVNGKEMPIWIADYVLASYGTGAIMAVPAHDERDWAFAKQFNLEIIPVLEGGNVDEAAYTEDGIHINSGFLDGLDKACAITKMVAWLEETGVGHEKVSYRLRDWLFSRQRYWGEPIPIIHWEDGTSTAVPEQDLPLVLPVTKDIRPSGTGESPLANLTDWLEVTREDGVKGRRETNTMPQWAGSSWYYLRYIDPHNDEQLADKDLLKQWLPVDIYIGGAEHAVLHLLYARFWHKVLYDLGVVPTKEPFQKLFNQGMILGTSYRDHRGALVATDKVDKRDGSFFHMETGEELEQAPAKMSKSLKNVVNPDDVVEQYGADTLRVYEMFMGPLDASIAWSEEGLEGARKFLDRVYRLITTKEIVAENSGALDKAYHETVKAVTEQIEGMKFNTAIAQLMIFVNAANKEDELYVAYAKGFVQLLAPFAPHLGEELWQILTASGQSISYVAWPTHDDSKLVENDVEIVVQIKGKVKAKLVVAKDLSREELEKVALAHDKIQAEIAGKEVAKVIVVPNKLVNIVVK</sequence>
<name>SYL_STREM</name>
<accession>B4U0A1</accession>
<protein>
    <recommendedName>
        <fullName evidence="1">Leucine--tRNA ligase</fullName>
        <ecNumber evidence="1">6.1.1.4</ecNumber>
    </recommendedName>
    <alternativeName>
        <fullName evidence="1">Leucyl-tRNA synthetase</fullName>
        <shortName evidence="1">LeuRS</shortName>
    </alternativeName>
</protein>
<organism>
    <name type="scientific">Streptococcus equi subsp. zooepidemicus (strain MGCS10565)</name>
    <dbReference type="NCBI Taxonomy" id="552526"/>
    <lineage>
        <taxon>Bacteria</taxon>
        <taxon>Bacillati</taxon>
        <taxon>Bacillota</taxon>
        <taxon>Bacilli</taxon>
        <taxon>Lactobacillales</taxon>
        <taxon>Streptococcaceae</taxon>
        <taxon>Streptococcus</taxon>
    </lineage>
</organism>